<reference key="1">
    <citation type="journal article" date="2006" name="J. Bacteriol.">
        <title>Genome sequence of Aeromonas hydrophila ATCC 7966T: jack of all trades.</title>
        <authorList>
            <person name="Seshadri R."/>
            <person name="Joseph S.W."/>
            <person name="Chopra A.K."/>
            <person name="Sha J."/>
            <person name="Shaw J."/>
            <person name="Graf J."/>
            <person name="Haft D.H."/>
            <person name="Wu M."/>
            <person name="Ren Q."/>
            <person name="Rosovitz M.J."/>
            <person name="Madupu R."/>
            <person name="Tallon L."/>
            <person name="Kim M."/>
            <person name="Jin S."/>
            <person name="Vuong H."/>
            <person name="Stine O.C."/>
            <person name="Ali A."/>
            <person name="Horneman A.J."/>
            <person name="Heidelberg J.F."/>
        </authorList>
    </citation>
    <scope>NUCLEOTIDE SEQUENCE [LARGE SCALE GENOMIC DNA]</scope>
    <source>
        <strain>ATCC 7966 / DSM 30187 / BCRC 13018 / CCUG 14551 / JCM 1027 / KCTC 2358 / NCIMB 9240 / NCTC 8049</strain>
    </source>
</reference>
<sequence>MSNGFIVQIIGAVVDIEFPQDAVPQVYDALKVVSEGQGQGLVLEVQQQIGGGVVRCITMGSSDGLRRGLEVVNSGKSIQVPVGVSTLGRIMNVLGDPIDEKGPIGEEERWSIHRAAPSYEDQSNSNDLLETGIKVIDLVCPFAKGGKVGLFGGAGVGKTVNMMELIRNIAIEHSGYSVFAGVGERTREGNDFYHEMMESNVLDKVSLVYGQMNEPPGNRLRVALTGLTMAEKFRDEGRDVLFFVDNIYRYTLAGTEVSALLGRMPSAVGYQPTLAEEMGVLQERITSTKTGSITSVQAVYVPADDLTDPSPATTFAHLDATVVLSRQIAALGIYPAVDPLDSTSRQLDPLVVGKEHYETARGVQTVLQRYKELKDIIAILGMDELSEEDKLTVARARKIERFLSQPFFVAEVFTGSPGKYVPLKETIRGFQGILKGEYDDLPEQAFYMVGSIDEVVEKAKKL</sequence>
<organism>
    <name type="scientific">Aeromonas hydrophila subsp. hydrophila (strain ATCC 7966 / DSM 30187 / BCRC 13018 / CCUG 14551 / JCM 1027 / KCTC 2358 / NCIMB 9240 / NCTC 8049)</name>
    <dbReference type="NCBI Taxonomy" id="380703"/>
    <lineage>
        <taxon>Bacteria</taxon>
        <taxon>Pseudomonadati</taxon>
        <taxon>Pseudomonadota</taxon>
        <taxon>Gammaproteobacteria</taxon>
        <taxon>Aeromonadales</taxon>
        <taxon>Aeromonadaceae</taxon>
        <taxon>Aeromonas</taxon>
    </lineage>
</organism>
<gene>
    <name evidence="1" type="primary">atpD</name>
    <name type="ordered locus">AHA_4262</name>
</gene>
<accession>A0KQX8</accession>
<protein>
    <recommendedName>
        <fullName evidence="1">ATP synthase subunit beta</fullName>
        <ecNumber evidence="1">7.1.2.2</ecNumber>
    </recommendedName>
    <alternativeName>
        <fullName evidence="1">ATP synthase F1 sector subunit beta</fullName>
    </alternativeName>
    <alternativeName>
        <fullName evidence="1">F-ATPase subunit beta</fullName>
    </alternativeName>
</protein>
<keyword id="KW-0066">ATP synthesis</keyword>
<keyword id="KW-0067">ATP-binding</keyword>
<keyword id="KW-0997">Cell inner membrane</keyword>
<keyword id="KW-1003">Cell membrane</keyword>
<keyword id="KW-0139">CF(1)</keyword>
<keyword id="KW-0375">Hydrogen ion transport</keyword>
<keyword id="KW-0406">Ion transport</keyword>
<keyword id="KW-0472">Membrane</keyword>
<keyword id="KW-0547">Nucleotide-binding</keyword>
<keyword id="KW-1185">Reference proteome</keyword>
<keyword id="KW-1278">Translocase</keyword>
<keyword id="KW-0813">Transport</keyword>
<dbReference type="EC" id="7.1.2.2" evidence="1"/>
<dbReference type="EMBL" id="CP000462">
    <property type="protein sequence ID" value="ABK37563.1"/>
    <property type="molecule type" value="Genomic_DNA"/>
</dbReference>
<dbReference type="RefSeq" id="WP_005307215.1">
    <property type="nucleotide sequence ID" value="NC_008570.1"/>
</dbReference>
<dbReference type="RefSeq" id="YP_858679.1">
    <property type="nucleotide sequence ID" value="NC_008570.1"/>
</dbReference>
<dbReference type="SMR" id="A0KQX8"/>
<dbReference type="STRING" id="380703.AHA_4262"/>
<dbReference type="EnsemblBacteria" id="ABK37563">
    <property type="protein sequence ID" value="ABK37563"/>
    <property type="gene ID" value="AHA_4262"/>
</dbReference>
<dbReference type="GeneID" id="47843333"/>
<dbReference type="KEGG" id="aha:AHA_4262"/>
<dbReference type="PATRIC" id="fig|380703.7.peg.4212"/>
<dbReference type="eggNOG" id="COG0055">
    <property type="taxonomic scope" value="Bacteria"/>
</dbReference>
<dbReference type="HOGENOM" id="CLU_022398_0_2_6"/>
<dbReference type="OrthoDB" id="9801639at2"/>
<dbReference type="PRO" id="PR:A0KQX8"/>
<dbReference type="Proteomes" id="UP000000756">
    <property type="component" value="Chromosome"/>
</dbReference>
<dbReference type="GO" id="GO:0005886">
    <property type="term" value="C:plasma membrane"/>
    <property type="evidence" value="ECO:0007669"/>
    <property type="project" value="UniProtKB-SubCell"/>
</dbReference>
<dbReference type="GO" id="GO:0045259">
    <property type="term" value="C:proton-transporting ATP synthase complex"/>
    <property type="evidence" value="ECO:0007669"/>
    <property type="project" value="UniProtKB-KW"/>
</dbReference>
<dbReference type="GO" id="GO:0005524">
    <property type="term" value="F:ATP binding"/>
    <property type="evidence" value="ECO:0007669"/>
    <property type="project" value="UniProtKB-UniRule"/>
</dbReference>
<dbReference type="GO" id="GO:0016887">
    <property type="term" value="F:ATP hydrolysis activity"/>
    <property type="evidence" value="ECO:0007669"/>
    <property type="project" value="InterPro"/>
</dbReference>
<dbReference type="GO" id="GO:0046933">
    <property type="term" value="F:proton-transporting ATP synthase activity, rotational mechanism"/>
    <property type="evidence" value="ECO:0007669"/>
    <property type="project" value="UniProtKB-UniRule"/>
</dbReference>
<dbReference type="CDD" id="cd18110">
    <property type="entry name" value="ATP-synt_F1_beta_C"/>
    <property type="match status" value="1"/>
</dbReference>
<dbReference type="CDD" id="cd18115">
    <property type="entry name" value="ATP-synt_F1_beta_N"/>
    <property type="match status" value="1"/>
</dbReference>
<dbReference type="CDD" id="cd01133">
    <property type="entry name" value="F1-ATPase_beta_CD"/>
    <property type="match status" value="1"/>
</dbReference>
<dbReference type="FunFam" id="1.10.1140.10:FF:000001">
    <property type="entry name" value="ATP synthase subunit beta"/>
    <property type="match status" value="1"/>
</dbReference>
<dbReference type="FunFam" id="3.40.50.300:FF:000004">
    <property type="entry name" value="ATP synthase subunit beta"/>
    <property type="match status" value="1"/>
</dbReference>
<dbReference type="Gene3D" id="2.40.10.170">
    <property type="match status" value="1"/>
</dbReference>
<dbReference type="Gene3D" id="1.10.1140.10">
    <property type="entry name" value="Bovine Mitochondrial F1-atpase, Atp Synthase Beta Chain, Chain D, domain 3"/>
    <property type="match status" value="1"/>
</dbReference>
<dbReference type="Gene3D" id="3.40.50.300">
    <property type="entry name" value="P-loop containing nucleotide triphosphate hydrolases"/>
    <property type="match status" value="1"/>
</dbReference>
<dbReference type="HAMAP" id="MF_01347">
    <property type="entry name" value="ATP_synth_beta_bact"/>
    <property type="match status" value="1"/>
</dbReference>
<dbReference type="InterPro" id="IPR003593">
    <property type="entry name" value="AAA+_ATPase"/>
</dbReference>
<dbReference type="InterPro" id="IPR055190">
    <property type="entry name" value="ATP-synt_VA_C"/>
</dbReference>
<dbReference type="InterPro" id="IPR005722">
    <property type="entry name" value="ATP_synth_F1_bsu"/>
</dbReference>
<dbReference type="InterPro" id="IPR020003">
    <property type="entry name" value="ATPase_a/bsu_AS"/>
</dbReference>
<dbReference type="InterPro" id="IPR050053">
    <property type="entry name" value="ATPase_alpha/beta_chains"/>
</dbReference>
<dbReference type="InterPro" id="IPR004100">
    <property type="entry name" value="ATPase_F1/V1/A1_a/bsu_N"/>
</dbReference>
<dbReference type="InterPro" id="IPR036121">
    <property type="entry name" value="ATPase_F1/V1/A1_a/bsu_N_sf"/>
</dbReference>
<dbReference type="InterPro" id="IPR000194">
    <property type="entry name" value="ATPase_F1/V1/A1_a/bsu_nucl-bd"/>
</dbReference>
<dbReference type="InterPro" id="IPR024034">
    <property type="entry name" value="ATPase_F1/V1_b/a_C"/>
</dbReference>
<dbReference type="InterPro" id="IPR027417">
    <property type="entry name" value="P-loop_NTPase"/>
</dbReference>
<dbReference type="NCBIfam" id="TIGR01039">
    <property type="entry name" value="atpD"/>
    <property type="match status" value="1"/>
</dbReference>
<dbReference type="PANTHER" id="PTHR15184">
    <property type="entry name" value="ATP SYNTHASE"/>
    <property type="match status" value="1"/>
</dbReference>
<dbReference type="PANTHER" id="PTHR15184:SF71">
    <property type="entry name" value="ATP SYNTHASE SUBUNIT BETA, MITOCHONDRIAL"/>
    <property type="match status" value="1"/>
</dbReference>
<dbReference type="Pfam" id="PF00006">
    <property type="entry name" value="ATP-synt_ab"/>
    <property type="match status" value="1"/>
</dbReference>
<dbReference type="Pfam" id="PF02874">
    <property type="entry name" value="ATP-synt_ab_N"/>
    <property type="match status" value="1"/>
</dbReference>
<dbReference type="Pfam" id="PF22919">
    <property type="entry name" value="ATP-synt_VA_C"/>
    <property type="match status" value="1"/>
</dbReference>
<dbReference type="SMART" id="SM00382">
    <property type="entry name" value="AAA"/>
    <property type="match status" value="1"/>
</dbReference>
<dbReference type="SUPFAM" id="SSF47917">
    <property type="entry name" value="C-terminal domain of alpha and beta subunits of F1 ATP synthase"/>
    <property type="match status" value="1"/>
</dbReference>
<dbReference type="SUPFAM" id="SSF50615">
    <property type="entry name" value="N-terminal domain of alpha and beta subunits of F1 ATP synthase"/>
    <property type="match status" value="1"/>
</dbReference>
<dbReference type="SUPFAM" id="SSF52540">
    <property type="entry name" value="P-loop containing nucleoside triphosphate hydrolases"/>
    <property type="match status" value="1"/>
</dbReference>
<dbReference type="PROSITE" id="PS00152">
    <property type="entry name" value="ATPASE_ALPHA_BETA"/>
    <property type="match status" value="1"/>
</dbReference>
<evidence type="ECO:0000255" key="1">
    <source>
        <dbReference type="HAMAP-Rule" id="MF_01347"/>
    </source>
</evidence>
<comment type="function">
    <text evidence="1">Produces ATP from ADP in the presence of a proton gradient across the membrane. The catalytic sites are hosted primarily by the beta subunits.</text>
</comment>
<comment type="catalytic activity">
    <reaction evidence="1">
        <text>ATP + H2O + 4 H(+)(in) = ADP + phosphate + 5 H(+)(out)</text>
        <dbReference type="Rhea" id="RHEA:57720"/>
        <dbReference type="ChEBI" id="CHEBI:15377"/>
        <dbReference type="ChEBI" id="CHEBI:15378"/>
        <dbReference type="ChEBI" id="CHEBI:30616"/>
        <dbReference type="ChEBI" id="CHEBI:43474"/>
        <dbReference type="ChEBI" id="CHEBI:456216"/>
        <dbReference type="EC" id="7.1.2.2"/>
    </reaction>
</comment>
<comment type="subunit">
    <text evidence="1">F-type ATPases have 2 components, CF(1) - the catalytic core - and CF(0) - the membrane proton channel. CF(1) has five subunits: alpha(3), beta(3), gamma(1), delta(1), epsilon(1). CF(0) has three main subunits: a(1), b(2) and c(9-12). The alpha and beta chains form an alternating ring which encloses part of the gamma chain. CF(1) is attached to CF(0) by a central stalk formed by the gamma and epsilon chains, while a peripheral stalk is formed by the delta and b chains.</text>
</comment>
<comment type="subcellular location">
    <subcellularLocation>
        <location evidence="1">Cell inner membrane</location>
        <topology evidence="1">Peripheral membrane protein</topology>
    </subcellularLocation>
</comment>
<comment type="similarity">
    <text evidence="1">Belongs to the ATPase alpha/beta chains family.</text>
</comment>
<feature type="chain" id="PRO_1000055090" description="ATP synthase subunit beta">
    <location>
        <begin position="1"/>
        <end position="462"/>
    </location>
</feature>
<feature type="binding site" evidence="1">
    <location>
        <begin position="152"/>
        <end position="159"/>
    </location>
    <ligand>
        <name>ATP</name>
        <dbReference type="ChEBI" id="CHEBI:30616"/>
    </ligand>
</feature>
<proteinExistence type="inferred from homology"/>
<name>ATPB_AERHH</name>